<organism>
    <name type="scientific">Shigella dysenteriae serotype 1 (strain Sd197)</name>
    <dbReference type="NCBI Taxonomy" id="300267"/>
    <lineage>
        <taxon>Bacteria</taxon>
        <taxon>Pseudomonadati</taxon>
        <taxon>Pseudomonadota</taxon>
        <taxon>Gammaproteobacteria</taxon>
        <taxon>Enterobacterales</taxon>
        <taxon>Enterobacteriaceae</taxon>
        <taxon>Shigella</taxon>
    </lineage>
</organism>
<accession>Q32AM6</accession>
<protein>
    <recommendedName>
        <fullName evidence="2">Pimeloyl-[acyl-carrier protein] methyl ester esterase</fullName>
        <ecNumber evidence="2">3.1.1.85</ecNumber>
    </recommendedName>
    <alternativeName>
        <fullName evidence="2">Biotin synthesis protein BioH</fullName>
    </alternativeName>
    <alternativeName>
        <fullName evidence="2">Carboxylesterase BioH</fullName>
    </alternativeName>
</protein>
<keyword id="KW-0093">Biotin biosynthesis</keyword>
<keyword id="KW-0963">Cytoplasm</keyword>
<keyword id="KW-0378">Hydrolase</keyword>
<keyword id="KW-1185">Reference proteome</keyword>
<keyword id="KW-0719">Serine esterase</keyword>
<evidence type="ECO:0000255" key="1"/>
<evidence type="ECO:0000255" key="2">
    <source>
        <dbReference type="HAMAP-Rule" id="MF_01260"/>
    </source>
</evidence>
<reference key="1">
    <citation type="journal article" date="2005" name="Nucleic Acids Res.">
        <title>Genome dynamics and diversity of Shigella species, the etiologic agents of bacillary dysentery.</title>
        <authorList>
            <person name="Yang F."/>
            <person name="Yang J."/>
            <person name="Zhang X."/>
            <person name="Chen L."/>
            <person name="Jiang Y."/>
            <person name="Yan Y."/>
            <person name="Tang X."/>
            <person name="Wang J."/>
            <person name="Xiong Z."/>
            <person name="Dong J."/>
            <person name="Xue Y."/>
            <person name="Zhu Y."/>
            <person name="Xu X."/>
            <person name="Sun L."/>
            <person name="Chen S."/>
            <person name="Nie H."/>
            <person name="Peng J."/>
            <person name="Xu J."/>
            <person name="Wang Y."/>
            <person name="Yuan Z."/>
            <person name="Wen Y."/>
            <person name="Yao Z."/>
            <person name="Shen Y."/>
            <person name="Qiang B."/>
            <person name="Hou Y."/>
            <person name="Yu J."/>
            <person name="Jin Q."/>
        </authorList>
    </citation>
    <scope>NUCLEOTIDE SEQUENCE [LARGE SCALE GENOMIC DNA]</scope>
    <source>
        <strain>Sd197</strain>
    </source>
</reference>
<name>BIOH_SHIDS</name>
<dbReference type="EC" id="3.1.1.85" evidence="2"/>
<dbReference type="EMBL" id="CP000034">
    <property type="protein sequence ID" value="ABB63629.1"/>
    <property type="molecule type" value="Genomic_DNA"/>
</dbReference>
<dbReference type="RefSeq" id="WP_001060094.1">
    <property type="nucleotide sequence ID" value="NC_007606.1"/>
</dbReference>
<dbReference type="RefSeq" id="YP_405120.1">
    <property type="nucleotide sequence ID" value="NC_007606.1"/>
</dbReference>
<dbReference type="SMR" id="Q32AM6"/>
<dbReference type="STRING" id="300267.SDY_3663"/>
<dbReference type="ESTHER" id="shifl-BIOH">
    <property type="family name" value="BioH"/>
</dbReference>
<dbReference type="EnsemblBacteria" id="ABB63629">
    <property type="protein sequence ID" value="ABB63629"/>
    <property type="gene ID" value="SDY_3663"/>
</dbReference>
<dbReference type="KEGG" id="sdy:SDY_3663"/>
<dbReference type="PATRIC" id="fig|300267.13.peg.4348"/>
<dbReference type="HOGENOM" id="CLU_020336_12_2_6"/>
<dbReference type="UniPathway" id="UPA00078"/>
<dbReference type="Proteomes" id="UP000002716">
    <property type="component" value="Chromosome"/>
</dbReference>
<dbReference type="GO" id="GO:0005737">
    <property type="term" value="C:cytoplasm"/>
    <property type="evidence" value="ECO:0007669"/>
    <property type="project" value="UniProtKB-SubCell"/>
</dbReference>
<dbReference type="GO" id="GO:0090499">
    <property type="term" value="F:pimelyl-[acyl-carrier protein] methyl ester esterase activity"/>
    <property type="evidence" value="ECO:0007669"/>
    <property type="project" value="UniProtKB-EC"/>
</dbReference>
<dbReference type="GO" id="GO:0009102">
    <property type="term" value="P:biotin biosynthetic process"/>
    <property type="evidence" value="ECO:0007669"/>
    <property type="project" value="UniProtKB-UniRule"/>
</dbReference>
<dbReference type="FunFam" id="3.40.50.1820:FF:000045">
    <property type="entry name" value="Pimeloyl-[acyl-carrier protein] methyl ester esterase"/>
    <property type="match status" value="1"/>
</dbReference>
<dbReference type="Gene3D" id="3.40.50.1820">
    <property type="entry name" value="alpha/beta hydrolase"/>
    <property type="match status" value="1"/>
</dbReference>
<dbReference type="HAMAP" id="MF_01260">
    <property type="entry name" value="Carboxylester"/>
    <property type="match status" value="1"/>
</dbReference>
<dbReference type="InterPro" id="IPR000073">
    <property type="entry name" value="AB_hydrolase_1"/>
</dbReference>
<dbReference type="InterPro" id="IPR029058">
    <property type="entry name" value="AB_hydrolase_fold"/>
</dbReference>
<dbReference type="InterPro" id="IPR010076">
    <property type="entry name" value="BioH"/>
</dbReference>
<dbReference type="InterPro" id="IPR050228">
    <property type="entry name" value="Carboxylesterase_BioH"/>
</dbReference>
<dbReference type="NCBIfam" id="TIGR01738">
    <property type="entry name" value="bioH"/>
    <property type="match status" value="1"/>
</dbReference>
<dbReference type="NCBIfam" id="NF007674">
    <property type="entry name" value="PRK10349.1"/>
    <property type="match status" value="1"/>
</dbReference>
<dbReference type="PANTHER" id="PTHR43194">
    <property type="entry name" value="HYDROLASE ALPHA/BETA FOLD FAMILY"/>
    <property type="match status" value="1"/>
</dbReference>
<dbReference type="PANTHER" id="PTHR43194:SF5">
    <property type="entry name" value="PIMELOYL-[ACYL-CARRIER PROTEIN] METHYL ESTER ESTERASE"/>
    <property type="match status" value="1"/>
</dbReference>
<dbReference type="Pfam" id="PF00561">
    <property type="entry name" value="Abhydrolase_1"/>
    <property type="match status" value="1"/>
</dbReference>
<dbReference type="SUPFAM" id="SSF53474">
    <property type="entry name" value="alpha/beta-Hydrolases"/>
    <property type="match status" value="1"/>
</dbReference>
<gene>
    <name evidence="2" type="primary">bioH</name>
    <name type="ordered locus">SDY_3663</name>
</gene>
<feature type="chain" id="PRO_1000067277" description="Pimeloyl-[acyl-carrier protein] methyl ester esterase">
    <location>
        <begin position="1"/>
        <end position="256"/>
    </location>
</feature>
<feature type="domain" description="AB hydrolase-1" evidence="1">
    <location>
        <begin position="15"/>
        <end position="242"/>
    </location>
</feature>
<feature type="active site" description="Nucleophile" evidence="2">
    <location>
        <position position="82"/>
    </location>
</feature>
<feature type="active site" evidence="2">
    <location>
        <position position="207"/>
    </location>
</feature>
<feature type="active site" evidence="2">
    <location>
        <position position="235"/>
    </location>
</feature>
<feature type="binding site" evidence="2">
    <location>
        <position position="22"/>
    </location>
    <ligand>
        <name>substrate</name>
    </ligand>
</feature>
<feature type="binding site" evidence="2">
    <location>
        <begin position="82"/>
        <end position="83"/>
    </location>
    <ligand>
        <name>substrate</name>
    </ligand>
</feature>
<feature type="binding site" evidence="2">
    <location>
        <begin position="143"/>
        <end position="147"/>
    </location>
    <ligand>
        <name>substrate</name>
    </ligand>
</feature>
<feature type="binding site" evidence="2">
    <location>
        <position position="235"/>
    </location>
    <ligand>
        <name>substrate</name>
    </ligand>
</feature>
<comment type="function">
    <text evidence="2">The physiological role of BioH is to remove the methyl group introduced by BioC when the pimeloyl moiety is complete. It allows to synthesize pimeloyl-ACP via the fatty acid synthetic pathway through the hydrolysis of the ester bonds of pimeloyl-ACP esters.</text>
</comment>
<comment type="catalytic activity">
    <reaction evidence="2">
        <text>6-carboxyhexanoyl-[ACP] methyl ester + H2O = 6-carboxyhexanoyl-[ACP] + methanol + H(+)</text>
        <dbReference type="Rhea" id="RHEA:42700"/>
        <dbReference type="Rhea" id="RHEA-COMP:9955"/>
        <dbReference type="Rhea" id="RHEA-COMP:10186"/>
        <dbReference type="ChEBI" id="CHEBI:15377"/>
        <dbReference type="ChEBI" id="CHEBI:15378"/>
        <dbReference type="ChEBI" id="CHEBI:17790"/>
        <dbReference type="ChEBI" id="CHEBI:78846"/>
        <dbReference type="ChEBI" id="CHEBI:82735"/>
        <dbReference type="EC" id="3.1.1.85"/>
    </reaction>
</comment>
<comment type="pathway">
    <text evidence="2">Cofactor biosynthesis; biotin biosynthesis.</text>
</comment>
<comment type="subunit">
    <text evidence="2">Monomer.</text>
</comment>
<comment type="subcellular location">
    <subcellularLocation>
        <location evidence="2">Cytoplasm</location>
    </subcellularLocation>
</comment>
<comment type="similarity">
    <text evidence="2">Belongs to the AB hydrolase superfamily. Carboxylesterase BioH family.</text>
</comment>
<sequence length="256" mass="28634">MNNIWWQTKGQGNVHLVLLHGWGLNAEVWRCIDEELSSHFTLHLVDLPGFGRSRGFGAMSLADMAEAVLRQAPDKAIWLGWSLGGLVASQIALTHPERVQALVTVASSPCFSARDEWLGIKPDVLAGFQQQLSDDFQRTVERFLALQTMGTETARQDARALKKTVLALPMPEVDVLNGGLEILKTVDLRQPLQNVSMPFLRLYGYLDGLVPRKVVPMLDKLWPHSESYIFAKAAHAPFISHPVEFRHVLVALKQRV</sequence>
<proteinExistence type="inferred from homology"/>